<organism>
    <name type="scientific">Neurospora crassa (strain ATCC 24698 / 74-OR23-1A / CBS 708.71 / DSM 1257 / FGSC 987)</name>
    <dbReference type="NCBI Taxonomy" id="367110"/>
    <lineage>
        <taxon>Eukaryota</taxon>
        <taxon>Fungi</taxon>
        <taxon>Dikarya</taxon>
        <taxon>Ascomycota</taxon>
        <taxon>Pezizomycotina</taxon>
        <taxon>Sordariomycetes</taxon>
        <taxon>Sordariomycetidae</taxon>
        <taxon>Sordariales</taxon>
        <taxon>Sordariaceae</taxon>
        <taxon>Neurospora</taxon>
    </lineage>
</organism>
<feature type="chain" id="PRO_0000314737" description="COP9 signalosome complex subunit 7a">
    <location>
        <begin position="1"/>
        <end position="417"/>
    </location>
</feature>
<feature type="domain" description="PCI" evidence="2">
    <location>
        <begin position="2"/>
        <end position="179"/>
    </location>
</feature>
<feature type="region of interest" description="Disordered" evidence="3">
    <location>
        <begin position="240"/>
        <end position="417"/>
    </location>
</feature>
<feature type="compositionally biased region" description="Gly residues" evidence="3">
    <location>
        <begin position="263"/>
        <end position="290"/>
    </location>
</feature>
<feature type="compositionally biased region" description="Low complexity" evidence="3">
    <location>
        <begin position="291"/>
        <end position="311"/>
    </location>
</feature>
<feature type="compositionally biased region" description="Low complexity" evidence="3">
    <location>
        <begin position="320"/>
        <end position="330"/>
    </location>
</feature>
<feature type="compositionally biased region" description="Low complexity" evidence="3">
    <location>
        <begin position="343"/>
        <end position="352"/>
    </location>
</feature>
<feature type="compositionally biased region" description="Gly residues" evidence="3">
    <location>
        <begin position="367"/>
        <end position="379"/>
    </location>
</feature>
<feature type="compositionally biased region" description="Acidic residues" evidence="3">
    <location>
        <begin position="385"/>
        <end position="405"/>
    </location>
</feature>
<gene>
    <name type="primary">csn-7a</name>
    <name type="ORF">NCU08342</name>
</gene>
<comment type="function">
    <text evidence="1 4">Component of the COP9 signalosome (CSN) complex that acts as an regulator of the ubiquitin (Ubl) conjugation pathway by mediating the deneddylation of the cullin subunit of SCF-type E3 ubiquitin-protein ligase complexes (By similarity). The CSN complex is involved in the regulation of the circadian clock through its control of the stability of the SCF(FWD1) complex.</text>
</comment>
<comment type="subunit">
    <text evidence="4">Component of the COP9 signalosome (CSN) complex.</text>
</comment>
<comment type="subcellular location">
    <subcellularLocation>
        <location evidence="1">Cytoplasm</location>
    </subcellularLocation>
    <subcellularLocation>
        <location evidence="1">Nucleus</location>
    </subcellularLocation>
</comment>
<comment type="similarity">
    <text evidence="5">Belongs to the CSN7/EIF3M family. CSN7 subfamily.</text>
</comment>
<evidence type="ECO:0000250" key="1"/>
<evidence type="ECO:0000255" key="2">
    <source>
        <dbReference type="PROSITE-ProRule" id="PRU01185"/>
    </source>
</evidence>
<evidence type="ECO:0000256" key="3">
    <source>
        <dbReference type="SAM" id="MobiDB-lite"/>
    </source>
</evidence>
<evidence type="ECO:0000269" key="4">
    <source>
    </source>
</evidence>
<evidence type="ECO:0000305" key="5"/>
<name>CSN7A_NEUCR</name>
<keyword id="KW-0963">Cytoplasm</keyword>
<keyword id="KW-0539">Nucleus</keyword>
<keyword id="KW-1185">Reference proteome</keyword>
<keyword id="KW-0736">Signalosome</keyword>
<proteinExistence type="evidence at protein level"/>
<accession>Q7SGS1</accession>
<dbReference type="EMBL" id="CM002236">
    <property type="protein sequence ID" value="EAA36009.1"/>
    <property type="molecule type" value="Genomic_DNA"/>
</dbReference>
<dbReference type="SMR" id="Q7SGS1"/>
<dbReference type="STRING" id="367110.Q7SGS1"/>
<dbReference type="PaxDb" id="5141-EFNCRP00000006440"/>
<dbReference type="EnsemblFungi" id="EAA36009">
    <property type="protein sequence ID" value="EAA36009"/>
    <property type="gene ID" value="NCU08342"/>
</dbReference>
<dbReference type="KEGG" id="ncr:NCU08342"/>
<dbReference type="VEuPathDB" id="FungiDB:NCU08342"/>
<dbReference type="HOGENOM" id="CLU_054426_0_0_1"/>
<dbReference type="InParanoid" id="Q7SGS1"/>
<dbReference type="OMA" id="QGWAGRC"/>
<dbReference type="OrthoDB" id="10265275at2759"/>
<dbReference type="Proteomes" id="UP000001805">
    <property type="component" value="Chromosome 1, Linkage Group I"/>
</dbReference>
<dbReference type="GO" id="GO:0008180">
    <property type="term" value="C:COP9 signalosome"/>
    <property type="evidence" value="ECO:0000318"/>
    <property type="project" value="GO_Central"/>
</dbReference>
<dbReference type="GO" id="GO:0005737">
    <property type="term" value="C:cytoplasm"/>
    <property type="evidence" value="ECO:0007669"/>
    <property type="project" value="UniProtKB-SubCell"/>
</dbReference>
<dbReference type="InterPro" id="IPR045237">
    <property type="entry name" value="COPS7/eIF3m"/>
</dbReference>
<dbReference type="InterPro" id="IPR000717">
    <property type="entry name" value="PCI_dom"/>
</dbReference>
<dbReference type="PANTHER" id="PTHR15350:SF5">
    <property type="entry name" value="COP9 SIGNALOSOME COMPLEX SUBUNIT 7"/>
    <property type="match status" value="1"/>
</dbReference>
<dbReference type="PANTHER" id="PTHR15350">
    <property type="entry name" value="COP9 SIGNALOSOME COMPLEX SUBUNIT 7/DENDRITIC CELL PROTEIN GA17"/>
    <property type="match status" value="1"/>
</dbReference>
<dbReference type="Pfam" id="PF22061">
    <property type="entry name" value="CSN7_HB_subdom"/>
    <property type="match status" value="1"/>
</dbReference>
<dbReference type="Pfam" id="PF01399">
    <property type="entry name" value="PCI"/>
    <property type="match status" value="1"/>
</dbReference>
<dbReference type="PROSITE" id="PS50250">
    <property type="entry name" value="PCI"/>
    <property type="match status" value="1"/>
</dbReference>
<protein>
    <recommendedName>
        <fullName>COP9 signalosome complex subunit 7a</fullName>
        <shortName>CSN complex subunit 7a</shortName>
    </recommendedName>
</protein>
<sequence>MEQTKALNALEPFIVLSKSATSPRAAADLVTRVTSAPNTFIFTELLQTPQIQSLEYSHEFSSYLTLLQIFSHGTYADYIANASALPALNDDQKLKLRQLSLLTLVANDGSNVPLDYDAMQRENNQAQPPNQSYASLTRRLELSSARELEELVISAIYAGLIEGQLDPANEMVQINSVAALRDVPARGVNGLLSSLQGWAGRCQATLQELEATMANLRDEADRRATEEQEWNNKMSQLLEDEQKGAVPSSSSSSLPFSWFNNTRGGGGGGDGAGAGGSFRGSGYSRGGGLSQGYRSSQRGSHQQHQNQSRQQQNHHHHHQSNQSGTNSLLTSGGGSYLSFREGPSAVSPSAAAGLMGSSTSFAALGGMETGSGSGSGPLGKRGSSDMDDSEEDIDDDTMDLDDEGDETKRGSKRKLTA</sequence>
<reference key="1">
    <citation type="journal article" date="2003" name="Nature">
        <title>The genome sequence of the filamentous fungus Neurospora crassa.</title>
        <authorList>
            <person name="Galagan J.E."/>
            <person name="Calvo S.E."/>
            <person name="Borkovich K.A."/>
            <person name="Selker E.U."/>
            <person name="Read N.D."/>
            <person name="Jaffe D.B."/>
            <person name="FitzHugh W."/>
            <person name="Ma L.-J."/>
            <person name="Smirnov S."/>
            <person name="Purcell S."/>
            <person name="Rehman B."/>
            <person name="Elkins T."/>
            <person name="Engels R."/>
            <person name="Wang S."/>
            <person name="Nielsen C.B."/>
            <person name="Butler J."/>
            <person name="Endrizzi M."/>
            <person name="Qui D."/>
            <person name="Ianakiev P."/>
            <person name="Bell-Pedersen D."/>
            <person name="Nelson M.A."/>
            <person name="Werner-Washburne M."/>
            <person name="Selitrennikoff C.P."/>
            <person name="Kinsey J.A."/>
            <person name="Braun E.L."/>
            <person name="Zelter A."/>
            <person name="Schulte U."/>
            <person name="Kothe G.O."/>
            <person name="Jedd G."/>
            <person name="Mewes H.-W."/>
            <person name="Staben C."/>
            <person name="Marcotte E."/>
            <person name="Greenberg D."/>
            <person name="Roy A."/>
            <person name="Foley K."/>
            <person name="Naylor J."/>
            <person name="Stange-Thomann N."/>
            <person name="Barrett R."/>
            <person name="Gnerre S."/>
            <person name="Kamal M."/>
            <person name="Kamvysselis M."/>
            <person name="Mauceli E.W."/>
            <person name="Bielke C."/>
            <person name="Rudd S."/>
            <person name="Frishman D."/>
            <person name="Krystofova S."/>
            <person name="Rasmussen C."/>
            <person name="Metzenberg R.L."/>
            <person name="Perkins D.D."/>
            <person name="Kroken S."/>
            <person name="Cogoni C."/>
            <person name="Macino G."/>
            <person name="Catcheside D.E.A."/>
            <person name="Li W."/>
            <person name="Pratt R.J."/>
            <person name="Osmani S.A."/>
            <person name="DeSouza C.P.C."/>
            <person name="Glass N.L."/>
            <person name="Orbach M.J."/>
            <person name="Berglund J.A."/>
            <person name="Voelker R."/>
            <person name="Yarden O."/>
            <person name="Plamann M."/>
            <person name="Seiler S."/>
            <person name="Dunlap J.C."/>
            <person name="Radford A."/>
            <person name="Aramayo R."/>
            <person name="Natvig D.O."/>
            <person name="Alex L.A."/>
            <person name="Mannhaupt G."/>
            <person name="Ebbole D.J."/>
            <person name="Freitag M."/>
            <person name="Paulsen I."/>
            <person name="Sachs M.S."/>
            <person name="Lander E.S."/>
            <person name="Nusbaum C."/>
            <person name="Birren B.W."/>
        </authorList>
    </citation>
    <scope>NUCLEOTIDE SEQUENCE [LARGE SCALE GENOMIC DNA]</scope>
    <source>
        <strain>ATCC 24698 / 74-OR23-1A / CBS 708.71 / DSM 1257 / FGSC 987</strain>
    </source>
</reference>
<reference key="2">
    <citation type="journal article" date="2005" name="Genes Dev.">
        <title>The COP9 signalosome regulates the Neurospora circadian clock by controlling the stability of the SCFFWD-1 complex.</title>
        <authorList>
            <person name="He Q."/>
            <person name="Cheng P."/>
            <person name="He Q."/>
            <person name="Liu Y."/>
        </authorList>
    </citation>
    <scope>IDENTIFICATION BY MASS SPECTROMETRY</scope>
    <scope>IDENTIFICATION IN THE COP9 SIGNALOSOME COMPLEX</scope>
    <scope>FUNCTION OF THE COP9 SIGNALOSOME COMPLEX</scope>
</reference>